<accession>P66066</accession>
<accession>A0A1R3Y483</accession>
<accession>O06260</accession>
<accession>X2BNH1</accession>
<feature type="chain" id="PRO_0000133745" description="Large ribosomal subunit protein uL13">
    <location>
        <begin position="1"/>
        <end position="147"/>
    </location>
</feature>
<feature type="region of interest" description="Disordered" evidence="2">
    <location>
        <begin position="128"/>
        <end position="147"/>
    </location>
</feature>
<gene>
    <name evidence="1" type="primary">rplM</name>
    <name type="ordered locus">BQ2027_MB3473C</name>
</gene>
<protein>
    <recommendedName>
        <fullName evidence="1">Large ribosomal subunit protein uL13</fullName>
    </recommendedName>
    <alternativeName>
        <fullName evidence="3">50S ribosomal protein L13</fullName>
    </alternativeName>
</protein>
<keyword id="KW-1185">Reference proteome</keyword>
<keyword id="KW-0687">Ribonucleoprotein</keyword>
<keyword id="KW-0689">Ribosomal protein</keyword>
<dbReference type="EMBL" id="LT708304">
    <property type="protein sequence ID" value="SIU02101.1"/>
    <property type="molecule type" value="Genomic_DNA"/>
</dbReference>
<dbReference type="RefSeq" id="NP_857113.1">
    <property type="nucleotide sequence ID" value="NC_002945.3"/>
</dbReference>
<dbReference type="RefSeq" id="WP_003418312.1">
    <property type="nucleotide sequence ID" value="NC_002945.4"/>
</dbReference>
<dbReference type="SMR" id="P66066"/>
<dbReference type="GeneID" id="45427433"/>
<dbReference type="KEGG" id="mbo:BQ2027_MB3473C"/>
<dbReference type="PATRIC" id="fig|233413.5.peg.3810"/>
<dbReference type="Proteomes" id="UP000001419">
    <property type="component" value="Chromosome"/>
</dbReference>
<dbReference type="GO" id="GO:0022625">
    <property type="term" value="C:cytosolic large ribosomal subunit"/>
    <property type="evidence" value="ECO:0007669"/>
    <property type="project" value="TreeGrafter"/>
</dbReference>
<dbReference type="GO" id="GO:0003729">
    <property type="term" value="F:mRNA binding"/>
    <property type="evidence" value="ECO:0007669"/>
    <property type="project" value="TreeGrafter"/>
</dbReference>
<dbReference type="GO" id="GO:0003735">
    <property type="term" value="F:structural constituent of ribosome"/>
    <property type="evidence" value="ECO:0007669"/>
    <property type="project" value="InterPro"/>
</dbReference>
<dbReference type="GO" id="GO:0017148">
    <property type="term" value="P:negative regulation of translation"/>
    <property type="evidence" value="ECO:0007669"/>
    <property type="project" value="TreeGrafter"/>
</dbReference>
<dbReference type="GO" id="GO:0006412">
    <property type="term" value="P:translation"/>
    <property type="evidence" value="ECO:0007669"/>
    <property type="project" value="UniProtKB-UniRule"/>
</dbReference>
<dbReference type="CDD" id="cd00392">
    <property type="entry name" value="Ribosomal_L13"/>
    <property type="match status" value="1"/>
</dbReference>
<dbReference type="FunFam" id="3.90.1180.10:FF:000001">
    <property type="entry name" value="50S ribosomal protein L13"/>
    <property type="match status" value="1"/>
</dbReference>
<dbReference type="Gene3D" id="3.90.1180.10">
    <property type="entry name" value="Ribosomal protein L13"/>
    <property type="match status" value="1"/>
</dbReference>
<dbReference type="HAMAP" id="MF_01366">
    <property type="entry name" value="Ribosomal_uL13"/>
    <property type="match status" value="1"/>
</dbReference>
<dbReference type="InterPro" id="IPR005822">
    <property type="entry name" value="Ribosomal_uL13"/>
</dbReference>
<dbReference type="InterPro" id="IPR005823">
    <property type="entry name" value="Ribosomal_uL13_bac-type"/>
</dbReference>
<dbReference type="InterPro" id="IPR023563">
    <property type="entry name" value="Ribosomal_uL13_CS"/>
</dbReference>
<dbReference type="InterPro" id="IPR036899">
    <property type="entry name" value="Ribosomal_uL13_sf"/>
</dbReference>
<dbReference type="NCBIfam" id="TIGR01066">
    <property type="entry name" value="rplM_bact"/>
    <property type="match status" value="1"/>
</dbReference>
<dbReference type="PANTHER" id="PTHR11545:SF2">
    <property type="entry name" value="LARGE RIBOSOMAL SUBUNIT PROTEIN UL13M"/>
    <property type="match status" value="1"/>
</dbReference>
<dbReference type="PANTHER" id="PTHR11545">
    <property type="entry name" value="RIBOSOMAL PROTEIN L13"/>
    <property type="match status" value="1"/>
</dbReference>
<dbReference type="Pfam" id="PF00572">
    <property type="entry name" value="Ribosomal_L13"/>
    <property type="match status" value="1"/>
</dbReference>
<dbReference type="PIRSF" id="PIRSF002181">
    <property type="entry name" value="Ribosomal_L13"/>
    <property type="match status" value="1"/>
</dbReference>
<dbReference type="SUPFAM" id="SSF52161">
    <property type="entry name" value="Ribosomal protein L13"/>
    <property type="match status" value="1"/>
</dbReference>
<dbReference type="PROSITE" id="PS00783">
    <property type="entry name" value="RIBOSOMAL_L13"/>
    <property type="match status" value="1"/>
</dbReference>
<organism>
    <name type="scientific">Mycobacterium bovis (strain ATCC BAA-935 / AF2122/97)</name>
    <dbReference type="NCBI Taxonomy" id="233413"/>
    <lineage>
        <taxon>Bacteria</taxon>
        <taxon>Bacillati</taxon>
        <taxon>Actinomycetota</taxon>
        <taxon>Actinomycetes</taxon>
        <taxon>Mycobacteriales</taxon>
        <taxon>Mycobacteriaceae</taxon>
        <taxon>Mycobacterium</taxon>
        <taxon>Mycobacterium tuberculosis complex</taxon>
    </lineage>
</organism>
<name>RL13_MYCBO</name>
<sequence>MPTYAPKAGDTTRSWYVIDATDVVLGRLAVAAANLLRGKHKPTFAPNVDGGDFVIVINADKVAISGDKLQHKMVYRHSGYPGGLHKRTIGELMQRHPDRVVEKAILGMLPKNRLSRQIQRKLRVYAGPEHPHSAQQPVPYELKQVAQ</sequence>
<comment type="function">
    <text evidence="1">This protein is one of the early assembly proteins of the 50S ribosomal subunit, although it is not seen to bind rRNA by itself. It is important during the early stages of 50S assembly.</text>
</comment>
<comment type="subunit">
    <text evidence="1">Part of the 50S ribosomal subunit.</text>
</comment>
<comment type="similarity">
    <text evidence="1">Belongs to the universal ribosomal protein uL13 family.</text>
</comment>
<reference key="1">
    <citation type="journal article" date="2003" name="Proc. Natl. Acad. Sci. U.S.A.">
        <title>The complete genome sequence of Mycobacterium bovis.</title>
        <authorList>
            <person name="Garnier T."/>
            <person name="Eiglmeier K."/>
            <person name="Camus J.-C."/>
            <person name="Medina N."/>
            <person name="Mansoor H."/>
            <person name="Pryor M."/>
            <person name="Duthoy S."/>
            <person name="Grondin S."/>
            <person name="Lacroix C."/>
            <person name="Monsempe C."/>
            <person name="Simon S."/>
            <person name="Harris B."/>
            <person name="Atkin R."/>
            <person name="Doggett J."/>
            <person name="Mayes R."/>
            <person name="Keating L."/>
            <person name="Wheeler P.R."/>
            <person name="Parkhill J."/>
            <person name="Barrell B.G."/>
            <person name="Cole S.T."/>
            <person name="Gordon S.V."/>
            <person name="Hewinson R.G."/>
        </authorList>
    </citation>
    <scope>NUCLEOTIDE SEQUENCE [LARGE SCALE GENOMIC DNA]</scope>
    <source>
        <strain>ATCC BAA-935 / AF2122/97</strain>
    </source>
</reference>
<reference key="2">
    <citation type="journal article" date="2017" name="Genome Announc.">
        <title>Updated reference genome sequence and annotation of Mycobacterium bovis AF2122/97.</title>
        <authorList>
            <person name="Malone K.M."/>
            <person name="Farrell D."/>
            <person name="Stuber T.P."/>
            <person name="Schubert O.T."/>
            <person name="Aebersold R."/>
            <person name="Robbe-Austerman S."/>
            <person name="Gordon S.V."/>
        </authorList>
    </citation>
    <scope>NUCLEOTIDE SEQUENCE [LARGE SCALE GENOMIC DNA]</scope>
    <scope>GENOME REANNOTATION</scope>
    <source>
        <strain>ATCC BAA-935 / AF2122/97</strain>
    </source>
</reference>
<evidence type="ECO:0000255" key="1">
    <source>
        <dbReference type="HAMAP-Rule" id="MF_01366"/>
    </source>
</evidence>
<evidence type="ECO:0000256" key="2">
    <source>
        <dbReference type="SAM" id="MobiDB-lite"/>
    </source>
</evidence>
<evidence type="ECO:0000305" key="3"/>
<proteinExistence type="inferred from homology"/>